<accession>Q9BA86</accession>
<accession>Q85Y18</accession>
<evidence type="ECO:0000255" key="1">
    <source>
        <dbReference type="HAMAP-Rule" id="MF_01347"/>
    </source>
</evidence>
<evidence type="ECO:0000305" key="2"/>
<feature type="chain" id="PRO_0000254510" description="ATP synthase subunit beta, chloroplastic">
    <location>
        <begin position="1"/>
        <end position="498"/>
    </location>
</feature>
<feature type="binding site" evidence="1">
    <location>
        <begin position="172"/>
        <end position="179"/>
    </location>
    <ligand>
        <name>ATP</name>
        <dbReference type="ChEBI" id="CHEBI:30616"/>
    </ligand>
</feature>
<feature type="sequence conflict" description="In Ref. 2; AAO27799." evidence="2" ref="2">
    <original>T</original>
    <variation>I</variation>
    <location>
        <position position="3"/>
    </location>
</feature>
<feature type="sequence conflict" description="In Ref. 2; AAO27799." evidence="2" ref="2">
    <original>T</original>
    <variation>P</variation>
    <location>
        <position position="7"/>
    </location>
</feature>
<feature type="sequence conflict" description="In Ref. 2; AAO27799." evidence="2" ref="2">
    <original>M</original>
    <variation>I</variation>
    <location>
        <position position="427"/>
    </location>
</feature>
<proteinExistence type="inferred from homology"/>
<dbReference type="EC" id="7.1.2.2" evidence="1"/>
<dbReference type="EMBL" id="AY012411">
    <property type="protein sequence ID" value="AAK14666.1"/>
    <property type="molecule type" value="Genomic_DNA"/>
</dbReference>
<dbReference type="EMBL" id="AY166799">
    <property type="protein sequence ID" value="AAO27799.1"/>
    <property type="molecule type" value="Genomic_DNA"/>
</dbReference>
<dbReference type="RefSeq" id="YP_003540938.1">
    <property type="nucleotide sequence ID" value="NC_013991.2"/>
</dbReference>
<dbReference type="SMR" id="Q9BA86"/>
<dbReference type="GeneID" id="8890517"/>
<dbReference type="KEGG" id="pda:8890517"/>
<dbReference type="OrthoDB" id="651731at2759"/>
<dbReference type="Proteomes" id="UP000228380">
    <property type="component" value="Chloroplast Pltd"/>
</dbReference>
<dbReference type="GO" id="GO:0009535">
    <property type="term" value="C:chloroplast thylakoid membrane"/>
    <property type="evidence" value="ECO:0007669"/>
    <property type="project" value="UniProtKB-SubCell"/>
</dbReference>
<dbReference type="GO" id="GO:0005739">
    <property type="term" value="C:mitochondrion"/>
    <property type="evidence" value="ECO:0007669"/>
    <property type="project" value="GOC"/>
</dbReference>
<dbReference type="GO" id="GO:0045259">
    <property type="term" value="C:proton-transporting ATP synthase complex"/>
    <property type="evidence" value="ECO:0007669"/>
    <property type="project" value="UniProtKB-KW"/>
</dbReference>
<dbReference type="GO" id="GO:0005524">
    <property type="term" value="F:ATP binding"/>
    <property type="evidence" value="ECO:0007669"/>
    <property type="project" value="UniProtKB-UniRule"/>
</dbReference>
<dbReference type="GO" id="GO:0016887">
    <property type="term" value="F:ATP hydrolysis activity"/>
    <property type="evidence" value="ECO:0007669"/>
    <property type="project" value="InterPro"/>
</dbReference>
<dbReference type="GO" id="GO:0046933">
    <property type="term" value="F:proton-transporting ATP synthase activity, rotational mechanism"/>
    <property type="evidence" value="ECO:0007669"/>
    <property type="project" value="UniProtKB-UniRule"/>
</dbReference>
<dbReference type="GO" id="GO:0042776">
    <property type="term" value="P:proton motive force-driven mitochondrial ATP synthesis"/>
    <property type="evidence" value="ECO:0007669"/>
    <property type="project" value="TreeGrafter"/>
</dbReference>
<dbReference type="CDD" id="cd18110">
    <property type="entry name" value="ATP-synt_F1_beta_C"/>
    <property type="match status" value="1"/>
</dbReference>
<dbReference type="CDD" id="cd18115">
    <property type="entry name" value="ATP-synt_F1_beta_N"/>
    <property type="match status" value="1"/>
</dbReference>
<dbReference type="CDD" id="cd01133">
    <property type="entry name" value="F1-ATPase_beta_CD"/>
    <property type="match status" value="1"/>
</dbReference>
<dbReference type="FunFam" id="1.10.1140.10:FF:000001">
    <property type="entry name" value="ATP synthase subunit beta"/>
    <property type="match status" value="1"/>
</dbReference>
<dbReference type="FunFam" id="3.40.50.12240:FF:000006">
    <property type="entry name" value="ATP synthase subunit beta"/>
    <property type="match status" value="1"/>
</dbReference>
<dbReference type="FunFam" id="3.40.50.300:FF:000004">
    <property type="entry name" value="ATP synthase subunit beta"/>
    <property type="match status" value="1"/>
</dbReference>
<dbReference type="FunFam" id="2.40.10.170:FF:000002">
    <property type="entry name" value="ATP synthase subunit beta, chloroplastic"/>
    <property type="match status" value="1"/>
</dbReference>
<dbReference type="Gene3D" id="2.40.10.170">
    <property type="match status" value="1"/>
</dbReference>
<dbReference type="Gene3D" id="1.10.1140.10">
    <property type="entry name" value="Bovine Mitochondrial F1-atpase, Atp Synthase Beta Chain, Chain D, domain 3"/>
    <property type="match status" value="1"/>
</dbReference>
<dbReference type="Gene3D" id="3.40.50.300">
    <property type="entry name" value="P-loop containing nucleotide triphosphate hydrolases"/>
    <property type="match status" value="1"/>
</dbReference>
<dbReference type="HAMAP" id="MF_01347">
    <property type="entry name" value="ATP_synth_beta_bact"/>
    <property type="match status" value="1"/>
</dbReference>
<dbReference type="InterPro" id="IPR003593">
    <property type="entry name" value="AAA+_ATPase"/>
</dbReference>
<dbReference type="InterPro" id="IPR055190">
    <property type="entry name" value="ATP-synt_VA_C"/>
</dbReference>
<dbReference type="InterPro" id="IPR005722">
    <property type="entry name" value="ATP_synth_F1_bsu"/>
</dbReference>
<dbReference type="InterPro" id="IPR020003">
    <property type="entry name" value="ATPase_a/bsu_AS"/>
</dbReference>
<dbReference type="InterPro" id="IPR050053">
    <property type="entry name" value="ATPase_alpha/beta_chains"/>
</dbReference>
<dbReference type="InterPro" id="IPR004100">
    <property type="entry name" value="ATPase_F1/V1/A1_a/bsu_N"/>
</dbReference>
<dbReference type="InterPro" id="IPR036121">
    <property type="entry name" value="ATPase_F1/V1/A1_a/bsu_N_sf"/>
</dbReference>
<dbReference type="InterPro" id="IPR000194">
    <property type="entry name" value="ATPase_F1/V1/A1_a/bsu_nucl-bd"/>
</dbReference>
<dbReference type="InterPro" id="IPR024034">
    <property type="entry name" value="ATPase_F1/V1_b/a_C"/>
</dbReference>
<dbReference type="InterPro" id="IPR027417">
    <property type="entry name" value="P-loop_NTPase"/>
</dbReference>
<dbReference type="NCBIfam" id="TIGR01039">
    <property type="entry name" value="atpD"/>
    <property type="match status" value="1"/>
</dbReference>
<dbReference type="PANTHER" id="PTHR15184">
    <property type="entry name" value="ATP SYNTHASE"/>
    <property type="match status" value="1"/>
</dbReference>
<dbReference type="PANTHER" id="PTHR15184:SF71">
    <property type="entry name" value="ATP SYNTHASE SUBUNIT BETA, MITOCHONDRIAL"/>
    <property type="match status" value="1"/>
</dbReference>
<dbReference type="Pfam" id="PF00006">
    <property type="entry name" value="ATP-synt_ab"/>
    <property type="match status" value="1"/>
</dbReference>
<dbReference type="Pfam" id="PF02874">
    <property type="entry name" value="ATP-synt_ab_N"/>
    <property type="match status" value="1"/>
</dbReference>
<dbReference type="Pfam" id="PF22919">
    <property type="entry name" value="ATP-synt_VA_C"/>
    <property type="match status" value="1"/>
</dbReference>
<dbReference type="SMART" id="SM00382">
    <property type="entry name" value="AAA"/>
    <property type="match status" value="1"/>
</dbReference>
<dbReference type="SUPFAM" id="SSF47917">
    <property type="entry name" value="C-terminal domain of alpha and beta subunits of F1 ATP synthase"/>
    <property type="match status" value="1"/>
</dbReference>
<dbReference type="SUPFAM" id="SSF50615">
    <property type="entry name" value="N-terminal domain of alpha and beta subunits of F1 ATP synthase"/>
    <property type="match status" value="1"/>
</dbReference>
<dbReference type="SUPFAM" id="SSF52540">
    <property type="entry name" value="P-loop containing nucleoside triphosphate hydrolases"/>
    <property type="match status" value="1"/>
</dbReference>
<dbReference type="PROSITE" id="PS00152">
    <property type="entry name" value="ATPASE_ALPHA_BETA"/>
    <property type="match status" value="1"/>
</dbReference>
<sequence length="498" mass="53834">MRTNPTTSSPVVSTLEEKNLGRIAQIIGPVLDVVFPPGKMPNIYNALVVKSRDTVGQQINVTCEVQQLLGNNRVRAVAMSATDGLMRGMEVIDTGAPLSVPVGGATLGRIFNVLGEPVDNLGPVDTRTTSPIHRSAPAFIQLDTKLSIFETGIKVVDLLAPYRRGGKIGLFGGAGVGKTVLIMELINNIAKAHGGVSVFGGVGERTREGNDLYMEMKESGVINEKNIAESKVALVYGQMNEPPGARMRVGLTALTMAEYFRDVNEQDVLLFIDNIFRFVQAGSEVSALLGRMPSAVGYQPTLSTEMGSLQERITSTKEGSITSIQAVYVPADDLTDPAPATTFAHLDATTVLSRVLAAKGIYPAVDPLDSTSTMLQPRIVGEEHYETAQRVKQTSQRYKELQDIIAILGLDELSEEDRLTVARARKMERFLSQPFFVAEVFTGSPGKYVGLAETIRGFQLILSGELDGLPEQAFYLVGNIDEATAKAMNLEVESKLKK</sequence>
<organism>
    <name type="scientific">Phoenix dactylifera</name>
    <name type="common">Date palm</name>
    <dbReference type="NCBI Taxonomy" id="42345"/>
    <lineage>
        <taxon>Eukaryota</taxon>
        <taxon>Viridiplantae</taxon>
        <taxon>Streptophyta</taxon>
        <taxon>Embryophyta</taxon>
        <taxon>Tracheophyta</taxon>
        <taxon>Spermatophyta</taxon>
        <taxon>Magnoliopsida</taxon>
        <taxon>Liliopsida</taxon>
        <taxon>Arecaceae</taxon>
        <taxon>Coryphoideae</taxon>
        <taxon>Phoeniceae</taxon>
        <taxon>Phoenix</taxon>
    </lineage>
</organism>
<reference key="1">
    <citation type="journal article" date="2002" name="Syst. Biol.">
        <title>A molecular phylogenetic study of the Palmae (Arecaceae) based on atpB, rbcL, and 18S nrDNA sequences.</title>
        <authorList>
            <person name="Hahn W.J."/>
        </authorList>
    </citation>
    <scope>NUCLEOTIDE SEQUENCE [GENOMIC DNA]</scope>
</reference>
<reference key="2">
    <citation type="submission" date="2002-10" db="EMBL/GenBank/DDBJ databases">
        <title>Partial sequencing of the chloroplast and mitochondrial chromosomes of Phoenix dactylifera.</title>
        <authorList>
            <person name="Perez-Perez J.M."/>
            <person name="Coy S."/>
            <person name="Villacorta C."/>
            <person name="Micol J.L."/>
        </authorList>
    </citation>
    <scope>NUCLEOTIDE SEQUENCE [GENOMIC DNA]</scope>
</reference>
<keyword id="KW-0066">ATP synthesis</keyword>
<keyword id="KW-0067">ATP-binding</keyword>
<keyword id="KW-0139">CF(1)</keyword>
<keyword id="KW-0150">Chloroplast</keyword>
<keyword id="KW-0375">Hydrogen ion transport</keyword>
<keyword id="KW-0406">Ion transport</keyword>
<keyword id="KW-0472">Membrane</keyword>
<keyword id="KW-0547">Nucleotide-binding</keyword>
<keyword id="KW-0934">Plastid</keyword>
<keyword id="KW-1185">Reference proteome</keyword>
<keyword id="KW-0793">Thylakoid</keyword>
<keyword id="KW-1278">Translocase</keyword>
<keyword id="KW-0813">Transport</keyword>
<comment type="function">
    <text evidence="1">Produces ATP from ADP in the presence of a proton gradient across the membrane. The catalytic sites are hosted primarily by the beta subunits.</text>
</comment>
<comment type="catalytic activity">
    <reaction evidence="1">
        <text>ATP + H2O + 4 H(+)(in) = ADP + phosphate + 5 H(+)(out)</text>
        <dbReference type="Rhea" id="RHEA:57720"/>
        <dbReference type="ChEBI" id="CHEBI:15377"/>
        <dbReference type="ChEBI" id="CHEBI:15378"/>
        <dbReference type="ChEBI" id="CHEBI:30616"/>
        <dbReference type="ChEBI" id="CHEBI:43474"/>
        <dbReference type="ChEBI" id="CHEBI:456216"/>
        <dbReference type="EC" id="7.1.2.2"/>
    </reaction>
</comment>
<comment type="subunit">
    <text evidence="1">F-type ATPases have 2 components, CF(1) - the catalytic core - and CF(0) - the membrane proton channel. CF(1) has five subunits: alpha(3), beta(3), gamma(1), delta(1), epsilon(1). CF(0) has four main subunits: a(1), b(1), b'(1) and c(9-12).</text>
</comment>
<comment type="subcellular location">
    <subcellularLocation>
        <location evidence="1">Plastid</location>
        <location evidence="1">Chloroplast thylakoid membrane</location>
        <topology evidence="1">Peripheral membrane protein</topology>
    </subcellularLocation>
</comment>
<comment type="similarity">
    <text evidence="1">Belongs to the ATPase alpha/beta chains family.</text>
</comment>
<protein>
    <recommendedName>
        <fullName evidence="1">ATP synthase subunit beta, chloroplastic</fullName>
        <ecNumber evidence="1">7.1.2.2</ecNumber>
    </recommendedName>
    <alternativeName>
        <fullName evidence="1">ATP synthase F1 sector subunit beta</fullName>
    </alternativeName>
    <alternativeName>
        <fullName evidence="1">F-ATPase subunit beta</fullName>
    </alternativeName>
</protein>
<name>ATPB_PHODC</name>
<geneLocation type="chloroplast"/>
<gene>
    <name evidence="1" type="primary">atpB</name>
</gene>